<keyword id="KW-1015">Disulfide bond</keyword>
<keyword id="KW-0265">Erythrocyte maturation</keyword>
<keyword id="KW-0325">Glycoprotein</keyword>
<keyword id="KW-0372">Hormone</keyword>
<keyword id="KW-1185">Reference proteome</keyword>
<keyword id="KW-0964">Secreted</keyword>
<keyword id="KW-0732">Signal</keyword>
<accession>P07321</accession>
<proteinExistence type="evidence at transcript level"/>
<name>EPO_MOUSE</name>
<dbReference type="EMBL" id="M12482">
    <property type="protein sequence ID" value="AAA37568.1"/>
    <property type="molecule type" value="Genomic_DNA"/>
</dbReference>
<dbReference type="EMBL" id="M12930">
    <property type="protein sequence ID" value="AAA37570.1"/>
    <property type="molecule type" value="Genomic_DNA"/>
</dbReference>
<dbReference type="EMBL" id="AF312033">
    <property type="protein sequence ID" value="AAK28825.1"/>
    <property type="molecule type" value="Genomic_DNA"/>
</dbReference>
<dbReference type="EMBL" id="Y11971">
    <property type="protein sequence ID" value="CAA72707.1"/>
    <property type="molecule type" value="mRNA"/>
</dbReference>
<dbReference type="CCDS" id="CCDS39332.1"/>
<dbReference type="PIR" id="A24902">
    <property type="entry name" value="A24902"/>
</dbReference>
<dbReference type="RefSeq" id="NP_031968.1">
    <property type="nucleotide sequence ID" value="NM_007942.2"/>
</dbReference>
<dbReference type="SMR" id="P07321"/>
<dbReference type="FunCoup" id="P07321">
    <property type="interactions" value="749"/>
</dbReference>
<dbReference type="STRING" id="10090.ENSMUSP00000106667"/>
<dbReference type="GlyCosmos" id="P07321">
    <property type="glycosylation" value="3 sites, No reported glycans"/>
</dbReference>
<dbReference type="GlyGen" id="P07321">
    <property type="glycosylation" value="4 sites"/>
</dbReference>
<dbReference type="PhosphoSitePlus" id="P07321"/>
<dbReference type="PaxDb" id="10090-ENSMUSP00000031723"/>
<dbReference type="Antibodypedia" id="4151">
    <property type="antibodies" value="1306 antibodies from 40 providers"/>
</dbReference>
<dbReference type="DNASU" id="13856"/>
<dbReference type="Ensembl" id="ENSMUST00000031723.14">
    <property type="protein sequence ID" value="ENSMUSP00000031723.7"/>
    <property type="gene ID" value="ENSMUSG00000029711.14"/>
</dbReference>
<dbReference type="Ensembl" id="ENSMUST00000111038.8">
    <property type="protein sequence ID" value="ENSMUSP00000106667.2"/>
    <property type="gene ID" value="ENSMUSG00000029711.14"/>
</dbReference>
<dbReference type="GeneID" id="13856"/>
<dbReference type="KEGG" id="mmu:13856"/>
<dbReference type="UCSC" id="uc009acm.1">
    <property type="organism name" value="mouse"/>
</dbReference>
<dbReference type="AGR" id="MGI:95407"/>
<dbReference type="CTD" id="2056"/>
<dbReference type="MGI" id="MGI:95407">
    <property type="gene designation" value="Epo"/>
</dbReference>
<dbReference type="VEuPathDB" id="HostDB:ENSMUSG00000029711"/>
<dbReference type="eggNOG" id="ENOG502RXRC">
    <property type="taxonomic scope" value="Eukaryota"/>
</dbReference>
<dbReference type="GeneTree" id="ENSGT00390000017226"/>
<dbReference type="InParanoid" id="P07321"/>
<dbReference type="OMA" id="AMEFPRL"/>
<dbReference type="OrthoDB" id="9892121at2759"/>
<dbReference type="PhylomeDB" id="P07321"/>
<dbReference type="TreeFam" id="TF333413"/>
<dbReference type="Reactome" id="R-MMU-9027276">
    <property type="pathway name" value="Erythropoietin activates Phosphoinositide-3-kinase (PI3K)"/>
</dbReference>
<dbReference type="Reactome" id="R-MMU-9027284">
    <property type="pathway name" value="Erythropoietin activates RAS"/>
</dbReference>
<dbReference type="SABIO-RK" id="P07321"/>
<dbReference type="BioGRID-ORCS" id="13856">
    <property type="hits" value="1 hit in 80 CRISPR screens"/>
</dbReference>
<dbReference type="CD-CODE" id="CE726F99">
    <property type="entry name" value="Postsynaptic density"/>
</dbReference>
<dbReference type="PRO" id="PR:P07321"/>
<dbReference type="Proteomes" id="UP000000589">
    <property type="component" value="Chromosome 5"/>
</dbReference>
<dbReference type="RNAct" id="P07321">
    <property type="molecule type" value="protein"/>
</dbReference>
<dbReference type="Bgee" id="ENSMUSG00000029711">
    <property type="expression patterns" value="Expressed in mesodermal cell in embryo and 33 other cell types or tissues"/>
</dbReference>
<dbReference type="ExpressionAtlas" id="P07321">
    <property type="expression patterns" value="baseline and differential"/>
</dbReference>
<dbReference type="GO" id="GO:0044297">
    <property type="term" value="C:cell body"/>
    <property type="evidence" value="ECO:0007669"/>
    <property type="project" value="Ensembl"/>
</dbReference>
<dbReference type="GO" id="GO:0009986">
    <property type="term" value="C:cell surface"/>
    <property type="evidence" value="ECO:0007669"/>
    <property type="project" value="Ensembl"/>
</dbReference>
<dbReference type="GO" id="GO:0005576">
    <property type="term" value="C:extracellular region"/>
    <property type="evidence" value="ECO:0000304"/>
    <property type="project" value="Reactome"/>
</dbReference>
<dbReference type="GO" id="GO:0005615">
    <property type="term" value="C:extracellular space"/>
    <property type="evidence" value="ECO:0000314"/>
    <property type="project" value="MGI"/>
</dbReference>
<dbReference type="GO" id="GO:0005125">
    <property type="term" value="F:cytokine activity"/>
    <property type="evidence" value="ECO:0007669"/>
    <property type="project" value="Ensembl"/>
</dbReference>
<dbReference type="GO" id="GO:0005128">
    <property type="term" value="F:erythropoietin receptor binding"/>
    <property type="evidence" value="ECO:0000250"/>
    <property type="project" value="UniProtKB"/>
</dbReference>
<dbReference type="GO" id="GO:0005179">
    <property type="term" value="F:hormone activity"/>
    <property type="evidence" value="ECO:0007669"/>
    <property type="project" value="UniProtKB-KW"/>
</dbReference>
<dbReference type="GO" id="GO:0030295">
    <property type="term" value="F:protein kinase activator activity"/>
    <property type="evidence" value="ECO:0000314"/>
    <property type="project" value="UniProtKB"/>
</dbReference>
<dbReference type="GO" id="GO:0006953">
    <property type="term" value="P:acute-phase response"/>
    <property type="evidence" value="ECO:0007669"/>
    <property type="project" value="Ensembl"/>
</dbReference>
<dbReference type="GO" id="GO:0001525">
    <property type="term" value="P:angiogenesis"/>
    <property type="evidence" value="ECO:0000304"/>
    <property type="project" value="DFLAT"/>
</dbReference>
<dbReference type="GO" id="GO:0006915">
    <property type="term" value="P:apoptotic process"/>
    <property type="evidence" value="ECO:0000314"/>
    <property type="project" value="MGI"/>
</dbReference>
<dbReference type="GO" id="GO:0055008">
    <property type="term" value="P:cardiac muscle tissue morphogenesis"/>
    <property type="evidence" value="ECO:0000304"/>
    <property type="project" value="DFLAT"/>
</dbReference>
<dbReference type="GO" id="GO:0097696">
    <property type="term" value="P:cell surface receptor signaling pathway via STAT"/>
    <property type="evidence" value="ECO:0007669"/>
    <property type="project" value="Ensembl"/>
</dbReference>
<dbReference type="GO" id="GO:0071474">
    <property type="term" value="P:cellular hyperosmotic response"/>
    <property type="evidence" value="ECO:0007669"/>
    <property type="project" value="Ensembl"/>
</dbReference>
<dbReference type="GO" id="GO:0007566">
    <property type="term" value="P:embryo implantation"/>
    <property type="evidence" value="ECO:0000314"/>
    <property type="project" value="MGI"/>
</dbReference>
<dbReference type="GO" id="GO:0030218">
    <property type="term" value="P:erythrocyte differentiation"/>
    <property type="evidence" value="ECO:0000314"/>
    <property type="project" value="MGI"/>
</dbReference>
<dbReference type="GO" id="GO:0043249">
    <property type="term" value="P:erythrocyte maturation"/>
    <property type="evidence" value="ECO:0007669"/>
    <property type="project" value="UniProtKB-KW"/>
</dbReference>
<dbReference type="GO" id="GO:0038162">
    <property type="term" value="P:erythropoietin-mediated signaling pathway"/>
    <property type="evidence" value="ECO:0000250"/>
    <property type="project" value="UniProtKB"/>
</dbReference>
<dbReference type="GO" id="GO:0003007">
    <property type="term" value="P:heart morphogenesis"/>
    <property type="evidence" value="ECO:0000304"/>
    <property type="project" value="DFLAT"/>
</dbReference>
<dbReference type="GO" id="GO:0042541">
    <property type="term" value="P:hemoglobin biosynthetic process"/>
    <property type="evidence" value="ECO:0000314"/>
    <property type="project" value="MGI"/>
</dbReference>
<dbReference type="GO" id="GO:0033028">
    <property type="term" value="P:myeloid cell apoptotic process"/>
    <property type="evidence" value="ECO:0000314"/>
    <property type="project" value="MGI"/>
</dbReference>
<dbReference type="GO" id="GO:0043066">
    <property type="term" value="P:negative regulation of apoptotic process"/>
    <property type="evidence" value="ECO:0000314"/>
    <property type="project" value="UniProtKB"/>
</dbReference>
<dbReference type="GO" id="GO:0010523">
    <property type="term" value="P:negative regulation of calcium ion transport into cytosol"/>
    <property type="evidence" value="ECO:0007669"/>
    <property type="project" value="Ensembl"/>
</dbReference>
<dbReference type="GO" id="GO:1902251">
    <property type="term" value="P:negative regulation of erythrocyte apoptotic process"/>
    <property type="evidence" value="ECO:0007669"/>
    <property type="project" value="Ensembl"/>
</dbReference>
<dbReference type="GO" id="GO:1902219">
    <property type="term" value="P:negative regulation of intrinsic apoptotic signaling pathway in response to osmotic stress"/>
    <property type="evidence" value="ECO:0007669"/>
    <property type="project" value="Ensembl"/>
</dbReference>
<dbReference type="GO" id="GO:0033033">
    <property type="term" value="P:negative regulation of myeloid cell apoptotic process"/>
    <property type="evidence" value="ECO:0000314"/>
    <property type="project" value="MGI"/>
</dbReference>
<dbReference type="GO" id="GO:0000122">
    <property type="term" value="P:negative regulation of transcription by RNA polymerase II"/>
    <property type="evidence" value="ECO:0007669"/>
    <property type="project" value="Ensembl"/>
</dbReference>
<dbReference type="GO" id="GO:0018105">
    <property type="term" value="P:peptidyl-serine phosphorylation"/>
    <property type="evidence" value="ECO:0000314"/>
    <property type="project" value="UniProtKB"/>
</dbReference>
<dbReference type="GO" id="GO:0042104">
    <property type="term" value="P:positive regulation of activated T cell proliferation"/>
    <property type="evidence" value="ECO:0007669"/>
    <property type="project" value="Ensembl"/>
</dbReference>
<dbReference type="GO" id="GO:0045893">
    <property type="term" value="P:positive regulation of DNA-templated transcription"/>
    <property type="evidence" value="ECO:0007669"/>
    <property type="project" value="Ensembl"/>
</dbReference>
<dbReference type="GO" id="GO:0070374">
    <property type="term" value="P:positive regulation of ERK1 and ERK2 cascade"/>
    <property type="evidence" value="ECO:0007669"/>
    <property type="project" value="Ensembl"/>
</dbReference>
<dbReference type="GO" id="GO:0045666">
    <property type="term" value="P:positive regulation of neuron differentiation"/>
    <property type="evidence" value="ECO:0007669"/>
    <property type="project" value="Ensembl"/>
</dbReference>
<dbReference type="GO" id="GO:0010976">
    <property type="term" value="P:positive regulation of neuron projection development"/>
    <property type="evidence" value="ECO:0007669"/>
    <property type="project" value="Ensembl"/>
</dbReference>
<dbReference type="GO" id="GO:0045860">
    <property type="term" value="P:positive regulation of protein kinase activity"/>
    <property type="evidence" value="ECO:0000314"/>
    <property type="project" value="UniProtKB"/>
</dbReference>
<dbReference type="GO" id="GO:0046579">
    <property type="term" value="P:positive regulation of Ras protein signal transduction"/>
    <property type="evidence" value="ECO:0007669"/>
    <property type="project" value="Ensembl"/>
</dbReference>
<dbReference type="GO" id="GO:0006357">
    <property type="term" value="P:regulation of transcription by RNA polymerase II"/>
    <property type="evidence" value="ECO:0000314"/>
    <property type="project" value="MGI"/>
</dbReference>
<dbReference type="GO" id="GO:0048678">
    <property type="term" value="P:response to axon injury"/>
    <property type="evidence" value="ECO:0007669"/>
    <property type="project" value="Ensembl"/>
</dbReference>
<dbReference type="GO" id="GO:0071548">
    <property type="term" value="P:response to dexamethasone"/>
    <property type="evidence" value="ECO:0007669"/>
    <property type="project" value="Ensembl"/>
</dbReference>
<dbReference type="GO" id="GO:0051602">
    <property type="term" value="P:response to electrical stimulus"/>
    <property type="evidence" value="ECO:0007669"/>
    <property type="project" value="Ensembl"/>
</dbReference>
<dbReference type="GO" id="GO:0043627">
    <property type="term" value="P:response to estrogen"/>
    <property type="evidence" value="ECO:0007669"/>
    <property type="project" value="Ensembl"/>
</dbReference>
<dbReference type="GO" id="GO:0055093">
    <property type="term" value="P:response to hyperoxia"/>
    <property type="evidence" value="ECO:0007669"/>
    <property type="project" value="Ensembl"/>
</dbReference>
<dbReference type="GO" id="GO:0001666">
    <property type="term" value="P:response to hypoxia"/>
    <property type="evidence" value="ECO:0000314"/>
    <property type="project" value="MGI"/>
</dbReference>
<dbReference type="GO" id="GO:0070555">
    <property type="term" value="P:response to interleukin-1"/>
    <property type="evidence" value="ECO:0007669"/>
    <property type="project" value="Ensembl"/>
</dbReference>
<dbReference type="GO" id="GO:0032496">
    <property type="term" value="P:response to lipopolysaccharide"/>
    <property type="evidence" value="ECO:0007669"/>
    <property type="project" value="Ensembl"/>
</dbReference>
<dbReference type="GO" id="GO:0009651">
    <property type="term" value="P:response to salt stress"/>
    <property type="evidence" value="ECO:0007669"/>
    <property type="project" value="Ensembl"/>
</dbReference>
<dbReference type="GO" id="GO:0033574">
    <property type="term" value="P:response to testosterone"/>
    <property type="evidence" value="ECO:0007669"/>
    <property type="project" value="Ensembl"/>
</dbReference>
<dbReference type="GO" id="GO:0033189">
    <property type="term" value="P:response to vitamin A"/>
    <property type="evidence" value="ECO:0007669"/>
    <property type="project" value="Ensembl"/>
</dbReference>
<dbReference type="GO" id="GO:0060979">
    <property type="term" value="P:vasculogenesis involved in coronary vascular morphogenesis"/>
    <property type="evidence" value="ECO:0000304"/>
    <property type="project" value="DFLAT"/>
</dbReference>
<dbReference type="GO" id="GO:0055010">
    <property type="term" value="P:ventricular cardiac muscle tissue morphogenesis"/>
    <property type="evidence" value="ECO:0000304"/>
    <property type="project" value="DFLAT"/>
</dbReference>
<dbReference type="GO" id="GO:0061032">
    <property type="term" value="P:visceral serous pericardium development"/>
    <property type="evidence" value="ECO:0000304"/>
    <property type="project" value="DFLAT"/>
</dbReference>
<dbReference type="FunFam" id="1.20.1250.10:FF:000013">
    <property type="entry name" value="Erythropoietin"/>
    <property type="match status" value="1"/>
</dbReference>
<dbReference type="Gene3D" id="1.20.1250.10">
    <property type="match status" value="1"/>
</dbReference>
<dbReference type="InterPro" id="IPR009079">
    <property type="entry name" value="4_helix_cytokine-like_core"/>
</dbReference>
<dbReference type="InterPro" id="IPR019767">
    <property type="entry name" value="EPO/TPO_CS"/>
</dbReference>
<dbReference type="InterPro" id="IPR001323">
    <property type="entry name" value="EPO_TPO"/>
</dbReference>
<dbReference type="InterPro" id="IPR003013">
    <property type="entry name" value="Erythroptn"/>
</dbReference>
<dbReference type="PANTHER" id="PTHR10370">
    <property type="entry name" value="ERYTHROPOIETIN"/>
    <property type="match status" value="1"/>
</dbReference>
<dbReference type="PANTHER" id="PTHR10370:SF0">
    <property type="entry name" value="ERYTHROPOIETIN"/>
    <property type="match status" value="1"/>
</dbReference>
<dbReference type="Pfam" id="PF00758">
    <property type="entry name" value="EPO_TPO"/>
    <property type="match status" value="1"/>
</dbReference>
<dbReference type="PIRSF" id="PIRSF001951">
    <property type="entry name" value="EPO"/>
    <property type="match status" value="1"/>
</dbReference>
<dbReference type="PRINTS" id="PR00272">
    <property type="entry name" value="ERYTHROPTN"/>
</dbReference>
<dbReference type="SUPFAM" id="SSF47266">
    <property type="entry name" value="4-helical cytokines"/>
    <property type="match status" value="1"/>
</dbReference>
<dbReference type="PROSITE" id="PS00817">
    <property type="entry name" value="EPO_TPO"/>
    <property type="match status" value="1"/>
</dbReference>
<gene>
    <name type="primary">Epo</name>
</gene>
<protein>
    <recommendedName>
        <fullName>Erythropoietin</fullName>
    </recommendedName>
</protein>
<feature type="signal peptide">
    <location>
        <begin position="1"/>
        <end position="26"/>
    </location>
</feature>
<feature type="chain" id="PRO_0000008405" description="Erythropoietin">
    <location>
        <begin position="27"/>
        <end position="192"/>
    </location>
</feature>
<feature type="glycosylation site" description="N-linked (GlcNAc...) asparagine" evidence="1">
    <location>
        <position position="50"/>
    </location>
</feature>
<feature type="glycosylation site" description="N-linked (GlcNAc...) asparagine" evidence="1">
    <location>
        <position position="64"/>
    </location>
</feature>
<feature type="glycosylation site" description="N-linked (GlcNAc...) asparagine" evidence="1">
    <location>
        <position position="109"/>
    </location>
</feature>
<feature type="disulfide bond" evidence="1">
    <location>
        <begin position="33"/>
        <end position="187"/>
    </location>
</feature>
<sequence length="192" mass="21365">MGVPERPTLLLLLSLLLIPLGLPVLCAPPRLICDSRVLERYILEAKEAENVTMGCAEGPRLSENITVPDTKVNFYAWKRMEVEEQAIEVWQGLSLLSEAILQAQALLANSSQPPETLQLHIDKAISGLRSLTSLLRVLGAQKELMSPPDTTPPAPLRTLTVDTFCKLFRVYANFLRGKLKLYTGEVCRRGDR</sequence>
<organism>
    <name type="scientific">Mus musculus</name>
    <name type="common">Mouse</name>
    <dbReference type="NCBI Taxonomy" id="10090"/>
    <lineage>
        <taxon>Eukaryota</taxon>
        <taxon>Metazoa</taxon>
        <taxon>Chordata</taxon>
        <taxon>Craniata</taxon>
        <taxon>Vertebrata</taxon>
        <taxon>Euteleostomi</taxon>
        <taxon>Mammalia</taxon>
        <taxon>Eutheria</taxon>
        <taxon>Euarchontoglires</taxon>
        <taxon>Glires</taxon>
        <taxon>Rodentia</taxon>
        <taxon>Myomorpha</taxon>
        <taxon>Muroidea</taxon>
        <taxon>Muridae</taxon>
        <taxon>Murinae</taxon>
        <taxon>Mus</taxon>
        <taxon>Mus</taxon>
    </lineage>
</organism>
<evidence type="ECO:0000250" key="1"/>
<evidence type="ECO:0000250" key="2">
    <source>
        <dbReference type="UniProtKB" id="P01588"/>
    </source>
</evidence>
<evidence type="ECO:0000305" key="3"/>
<reference key="1">
    <citation type="journal article" date="1986" name="Mol. Cell. Biol.">
        <title>Murine erythropoietin gene: cloning, expression, and human gene homology.</title>
        <authorList>
            <person name="Shoemaker C.B."/>
            <person name="Mitsock L.D."/>
        </authorList>
    </citation>
    <scope>NUCLEOTIDE SEQUENCE [GENOMIC DNA]</scope>
</reference>
<reference key="2">
    <citation type="journal article" date="1986" name="Mol. Cell. Biol.">
        <title>Cloning, sequencing, and evolutionary analysis of the mouse erythropoietin gene.</title>
        <authorList>
            <person name="McDonald J.D."/>
            <person name="Lin F.-K."/>
            <person name="Goldwasser E."/>
        </authorList>
    </citation>
    <scope>NUCLEOTIDE SEQUENCE [GENOMIC DNA]</scope>
</reference>
<reference key="3">
    <citation type="journal article" date="2001" name="Nucleic Acids Res.">
        <title>Comparative analysis of the gene-dense ACHE/TFR2 region on human chromosome 7q22 with the orthologous region on mouse chromosome 5.</title>
        <authorList>
            <person name="Wilson M.D."/>
            <person name="Riemer C."/>
            <person name="Martindale D.W."/>
            <person name="Schnupf P."/>
            <person name="Boright A.P."/>
            <person name="Cheung T.L."/>
            <person name="Hardy D.M."/>
            <person name="Schwartz S."/>
            <person name="Scherer S.W."/>
            <person name="Tsui L.-C."/>
            <person name="Miller W."/>
            <person name="Koop B.F."/>
        </authorList>
    </citation>
    <scope>NUCLEOTIDE SEQUENCE [GENOMIC DNA]</scope>
    <source>
        <strain>129/Sv</strain>
    </source>
</reference>
<reference key="4">
    <citation type="journal article" date="1997" name="Oncogene">
        <title>Abnormal erythropoietin (Epo) gene expression in the murine erythroleukemia IW32 cells results from a rearrangement between the G-protein beta2 subunit gene and the Epo gene.</title>
        <authorList>
            <person name="Chretien S."/>
            <person name="Duprez V."/>
            <person name="Maouche L."/>
            <person name="Gisselbrecht S."/>
            <person name="Mayeux P."/>
            <person name="Lacombe C."/>
        </authorList>
    </citation>
    <scope>NUCLEOTIDE SEQUENCE [MRNA] OF 1-52</scope>
    <source>
        <strain>ICFW</strain>
    </source>
</reference>
<comment type="function">
    <text evidence="2">Hormone involved in the regulation of erythrocyte proliferation and differentiation and the maintenance of a physiological level of circulating erythrocyte mass. Binds to EPOR leading to EPOR dimerization and JAK2 activation thereby activating specific downstream effectors, including STAT1 and STAT3.</text>
</comment>
<comment type="subcellular location">
    <subcellularLocation>
        <location>Secreted</location>
    </subcellularLocation>
</comment>
<comment type="tissue specificity">
    <text>Produced by kidney or liver of adult mammals and by liver of fetal or neonatal mammals.</text>
</comment>
<comment type="similarity">
    <text evidence="3">Belongs to the EPO/TPO family.</text>
</comment>